<name>U1SBP_BOVIN</name>
<protein>
    <recommendedName>
        <fullName>U11/U12 small nuclear ribonucleoprotein 35 kDa protein</fullName>
        <shortName>U11/U12 snRNP 35 kDa protein</shortName>
    </recommendedName>
    <alternativeName>
        <fullName>U1 snRNP-binding protein homolog</fullName>
    </alternativeName>
</protein>
<keyword id="KW-1017">Isopeptide bond</keyword>
<keyword id="KW-0507">mRNA processing</keyword>
<keyword id="KW-0508">mRNA splicing</keyword>
<keyword id="KW-0539">Nucleus</keyword>
<keyword id="KW-1185">Reference proteome</keyword>
<keyword id="KW-0694">RNA-binding</keyword>
<keyword id="KW-0747">Spliceosome</keyword>
<keyword id="KW-0832">Ubl conjugation</keyword>
<accession>Q1LZH0</accession>
<evidence type="ECO:0000250" key="1"/>
<evidence type="ECO:0000250" key="2">
    <source>
        <dbReference type="UniProtKB" id="Q16560"/>
    </source>
</evidence>
<evidence type="ECO:0000255" key="3">
    <source>
        <dbReference type="PROSITE-ProRule" id="PRU00176"/>
    </source>
</evidence>
<evidence type="ECO:0000256" key="4">
    <source>
        <dbReference type="SAM" id="MobiDB-lite"/>
    </source>
</evidence>
<dbReference type="EMBL" id="BC116002">
    <property type="protein sequence ID" value="AAI16003.1"/>
    <property type="molecule type" value="mRNA"/>
</dbReference>
<dbReference type="RefSeq" id="NP_001069024.1">
    <property type="nucleotide sequence ID" value="NM_001075556.2"/>
</dbReference>
<dbReference type="RefSeq" id="XP_005217863.1">
    <property type="nucleotide sequence ID" value="XM_005217806.3"/>
</dbReference>
<dbReference type="RefSeq" id="XP_024832949.1">
    <property type="nucleotide sequence ID" value="XM_024977181.2"/>
</dbReference>
<dbReference type="SMR" id="Q1LZH0"/>
<dbReference type="FunCoup" id="Q1LZH0">
    <property type="interactions" value="2271"/>
</dbReference>
<dbReference type="STRING" id="9913.ENSBTAP00000043747"/>
<dbReference type="PaxDb" id="9913-ENSBTAP00000043747"/>
<dbReference type="Ensembl" id="ENSBTAT00000010602.7">
    <property type="protein sequence ID" value="ENSBTAP00000043747.3"/>
    <property type="gene ID" value="ENSBTAG00000008060.7"/>
</dbReference>
<dbReference type="Ensembl" id="ENSBTAT00000092596.1">
    <property type="protein sequence ID" value="ENSBTAP00000091683.1"/>
    <property type="gene ID" value="ENSBTAG00000008060.7"/>
</dbReference>
<dbReference type="Ensembl" id="ENSBTAT00000092813.1">
    <property type="protein sequence ID" value="ENSBTAP00000101883.1"/>
    <property type="gene ID" value="ENSBTAG00000008060.7"/>
</dbReference>
<dbReference type="Ensembl" id="ENSBTAT00000096839.1">
    <property type="protein sequence ID" value="ENSBTAP00000102547.1"/>
    <property type="gene ID" value="ENSBTAG00000008060.7"/>
</dbReference>
<dbReference type="Ensembl" id="ENSBTAT00000119482.1">
    <property type="protein sequence ID" value="ENSBTAP00000079280.1"/>
    <property type="gene ID" value="ENSBTAG00000008060.7"/>
</dbReference>
<dbReference type="Ensembl" id="ENSBTAT00000133003.1">
    <property type="protein sequence ID" value="ENSBTAP00000092155.1"/>
    <property type="gene ID" value="ENSBTAG00000008060.7"/>
</dbReference>
<dbReference type="GeneID" id="512142"/>
<dbReference type="KEGG" id="bta:512142"/>
<dbReference type="CTD" id="11066"/>
<dbReference type="VEuPathDB" id="HostDB:ENSBTAG00000008060"/>
<dbReference type="VGNC" id="VGNC:35070">
    <property type="gene designation" value="SNRNP35"/>
</dbReference>
<dbReference type="eggNOG" id="KOG0113">
    <property type="taxonomic scope" value="Eukaryota"/>
</dbReference>
<dbReference type="GeneTree" id="ENSGT00940000157648"/>
<dbReference type="HOGENOM" id="CLU_035088_1_0_1"/>
<dbReference type="InParanoid" id="Q1LZH0"/>
<dbReference type="OMA" id="FERSRVM"/>
<dbReference type="OrthoDB" id="6159137at2759"/>
<dbReference type="TreeFam" id="TF331614"/>
<dbReference type="Reactome" id="R-BTA-72165">
    <property type="pathway name" value="mRNA Splicing - Minor Pathway"/>
</dbReference>
<dbReference type="Proteomes" id="UP000009136">
    <property type="component" value="Chromosome 17"/>
</dbReference>
<dbReference type="Bgee" id="ENSBTAG00000008060">
    <property type="expression patterns" value="Expressed in pons and 103 other cell types or tissues"/>
</dbReference>
<dbReference type="GO" id="GO:0005730">
    <property type="term" value="C:nucleolus"/>
    <property type="evidence" value="ECO:0007669"/>
    <property type="project" value="Ensembl"/>
</dbReference>
<dbReference type="GO" id="GO:0005689">
    <property type="term" value="C:U12-type spliceosomal complex"/>
    <property type="evidence" value="ECO:0000318"/>
    <property type="project" value="GO_Central"/>
</dbReference>
<dbReference type="GO" id="GO:0003729">
    <property type="term" value="F:mRNA binding"/>
    <property type="evidence" value="ECO:0000318"/>
    <property type="project" value="GO_Central"/>
</dbReference>
<dbReference type="GO" id="GO:0017069">
    <property type="term" value="F:snRNA binding"/>
    <property type="evidence" value="ECO:0000318"/>
    <property type="project" value="GO_Central"/>
</dbReference>
<dbReference type="GO" id="GO:0000398">
    <property type="term" value="P:mRNA splicing, via spliceosome"/>
    <property type="evidence" value="ECO:0000318"/>
    <property type="project" value="GO_Central"/>
</dbReference>
<dbReference type="CDD" id="cd12237">
    <property type="entry name" value="RRM_snRNP35"/>
    <property type="match status" value="1"/>
</dbReference>
<dbReference type="FunFam" id="3.30.70.330:FF:000132">
    <property type="entry name" value="Small nuclear ribonucleoprotein U11/U12 subunit 35"/>
    <property type="match status" value="1"/>
</dbReference>
<dbReference type="Gene3D" id="3.30.70.330">
    <property type="match status" value="1"/>
</dbReference>
<dbReference type="InterPro" id="IPR012677">
    <property type="entry name" value="Nucleotide-bd_a/b_plait_sf"/>
</dbReference>
<dbReference type="InterPro" id="IPR035979">
    <property type="entry name" value="RBD_domain_sf"/>
</dbReference>
<dbReference type="InterPro" id="IPR000504">
    <property type="entry name" value="RRM_dom"/>
</dbReference>
<dbReference type="InterPro" id="IPR034146">
    <property type="entry name" value="snRNP35_RRM"/>
</dbReference>
<dbReference type="InterPro" id="IPR051183">
    <property type="entry name" value="U1_U11-U12_snRNP_70-35kDa"/>
</dbReference>
<dbReference type="PANTHER" id="PTHR13952">
    <property type="entry name" value="U1 SMALL NUCLEAR RIBONUCLEOPROTEIN 70 KD"/>
    <property type="match status" value="1"/>
</dbReference>
<dbReference type="PANTHER" id="PTHR13952:SF6">
    <property type="entry name" value="U11_U12 SMALL NUCLEAR RIBONUCLEOPROTEIN 35 KDA PROTEIN"/>
    <property type="match status" value="1"/>
</dbReference>
<dbReference type="Pfam" id="PF00076">
    <property type="entry name" value="RRM_1"/>
    <property type="match status" value="1"/>
</dbReference>
<dbReference type="SMART" id="SM00360">
    <property type="entry name" value="RRM"/>
    <property type="match status" value="1"/>
</dbReference>
<dbReference type="SUPFAM" id="SSF54928">
    <property type="entry name" value="RNA-binding domain, RBD"/>
    <property type="match status" value="1"/>
</dbReference>
<dbReference type="PROSITE" id="PS50102">
    <property type="entry name" value="RRM"/>
    <property type="match status" value="1"/>
</dbReference>
<feature type="chain" id="PRO_0000307906" description="U11/U12 small nuclear ribonucleoprotein 35 kDa protein">
    <location>
        <begin position="1"/>
        <end position="245"/>
    </location>
</feature>
<feature type="domain" description="RRM" evidence="3">
    <location>
        <begin position="51"/>
        <end position="129"/>
    </location>
</feature>
<feature type="region of interest" description="Disordered" evidence="4">
    <location>
        <begin position="146"/>
        <end position="165"/>
    </location>
</feature>
<feature type="region of interest" description="Disordered" evidence="4">
    <location>
        <begin position="173"/>
        <end position="222"/>
    </location>
</feature>
<feature type="compositionally biased region" description="Basic and acidic residues" evidence="4">
    <location>
        <begin position="146"/>
        <end position="162"/>
    </location>
</feature>
<feature type="compositionally biased region" description="Basic and acidic residues" evidence="4">
    <location>
        <begin position="174"/>
        <end position="185"/>
    </location>
</feature>
<feature type="compositionally biased region" description="Basic and acidic residues" evidence="4">
    <location>
        <begin position="192"/>
        <end position="216"/>
    </location>
</feature>
<feature type="cross-link" description="Glycyl lysine isopeptide (Lys-Gly) (interchain with G-Cter in SUMO2)" evidence="2">
    <location>
        <position position="172"/>
    </location>
</feature>
<sequence>MNDWMPIAKEYDPLKAGSIDGTDEDPHDRAVWRAMLARYTPNKGVTGDPLLTLFVARLNLQTKEEKLKEVFSRYGDIRRLRLVRDLVTGFSKGYAFIEYKDERSLLKAYRDADGLVIDQHEIFVDYELERTLKGWIPRRLGGGLGGKKESGQLRFGGRDRPFRKPINLPVVKNDQFREGKRERRERSRSRERHWDSRMRDHHDRGREKRWQEREPARAWPEGDWERERDFRDDRVKGREKRDRSK</sequence>
<organism>
    <name type="scientific">Bos taurus</name>
    <name type="common">Bovine</name>
    <dbReference type="NCBI Taxonomy" id="9913"/>
    <lineage>
        <taxon>Eukaryota</taxon>
        <taxon>Metazoa</taxon>
        <taxon>Chordata</taxon>
        <taxon>Craniata</taxon>
        <taxon>Vertebrata</taxon>
        <taxon>Euteleostomi</taxon>
        <taxon>Mammalia</taxon>
        <taxon>Eutheria</taxon>
        <taxon>Laurasiatheria</taxon>
        <taxon>Artiodactyla</taxon>
        <taxon>Ruminantia</taxon>
        <taxon>Pecora</taxon>
        <taxon>Bovidae</taxon>
        <taxon>Bovinae</taxon>
        <taxon>Bos</taxon>
    </lineage>
</organism>
<comment type="subunit">
    <text evidence="1">Component of the U11/U12 snRNPs that are part of the U12-type spliceosome.</text>
</comment>
<comment type="subcellular location">
    <subcellularLocation>
        <location evidence="1">Nucleus</location>
    </subcellularLocation>
</comment>
<proteinExistence type="evidence at transcript level"/>
<reference key="1">
    <citation type="submission" date="2006-05" db="EMBL/GenBank/DDBJ databases">
        <authorList>
            <consortium name="NIH - Mammalian Gene Collection (MGC) project"/>
        </authorList>
    </citation>
    <scope>NUCLEOTIDE SEQUENCE [LARGE SCALE MRNA]</scope>
    <source>
        <strain>Hereford</strain>
        <tissue>Hypothalamus</tissue>
    </source>
</reference>
<gene>
    <name type="primary">SNRNP35</name>
    <name type="synonym">U1SNRNPBP</name>
</gene>